<keyword id="KW-0456">Lyase</keyword>
<accession>Q57FT6</accession>
<organism>
    <name type="scientific">Brucella abortus biovar 1 (strain 9-941)</name>
    <dbReference type="NCBI Taxonomy" id="262698"/>
    <lineage>
        <taxon>Bacteria</taxon>
        <taxon>Pseudomonadati</taxon>
        <taxon>Pseudomonadota</taxon>
        <taxon>Alphaproteobacteria</taxon>
        <taxon>Hyphomicrobiales</taxon>
        <taxon>Brucellaceae</taxon>
        <taxon>Brucella/Ochrobactrum group</taxon>
        <taxon>Brucella</taxon>
    </lineage>
</organism>
<protein>
    <recommendedName>
        <fullName evidence="1">Putative pterin-4-alpha-carbinolamine dehydratase</fullName>
        <shortName evidence="1">PHS</shortName>
        <ecNumber evidence="1">4.2.1.96</ecNumber>
    </recommendedName>
    <alternativeName>
        <fullName evidence="1">4-alpha-hydroxy-tetrahydropterin dehydratase</fullName>
    </alternativeName>
    <alternativeName>
        <fullName evidence="1">Pterin carbinolamine dehydratase</fullName>
        <shortName evidence="1">PCD</shortName>
    </alternativeName>
</protein>
<evidence type="ECO:0000255" key="1">
    <source>
        <dbReference type="HAMAP-Rule" id="MF_00434"/>
    </source>
</evidence>
<reference key="1">
    <citation type="journal article" date="2005" name="J. Bacteriol.">
        <title>Completion of the genome sequence of Brucella abortus and comparison to the highly similar genomes of Brucella melitensis and Brucella suis.</title>
        <authorList>
            <person name="Halling S.M."/>
            <person name="Peterson-Burch B.D."/>
            <person name="Bricker B.J."/>
            <person name="Zuerner R.L."/>
            <person name="Qing Z."/>
            <person name="Li L.-L."/>
            <person name="Kapur V."/>
            <person name="Alt D.P."/>
            <person name="Olsen S.C."/>
        </authorList>
    </citation>
    <scope>NUCLEOTIDE SEQUENCE [LARGE SCALE GENOMIC DNA]</scope>
    <source>
        <strain>9-941</strain>
    </source>
</reference>
<comment type="catalytic activity">
    <reaction evidence="1">
        <text>(4aS,6R)-4a-hydroxy-L-erythro-5,6,7,8-tetrahydrobiopterin = (6R)-L-erythro-6,7-dihydrobiopterin + H2O</text>
        <dbReference type="Rhea" id="RHEA:11920"/>
        <dbReference type="ChEBI" id="CHEBI:15377"/>
        <dbReference type="ChEBI" id="CHEBI:15642"/>
        <dbReference type="ChEBI" id="CHEBI:43120"/>
        <dbReference type="EC" id="4.2.1.96"/>
    </reaction>
</comment>
<comment type="similarity">
    <text evidence="1">Belongs to the pterin-4-alpha-carbinolamine dehydratase family.</text>
</comment>
<gene>
    <name type="ordered locus">BruAb1_0080</name>
</gene>
<sequence>MARNRLTESEMNEALRALDGWQKVDGREAITRSFKFKDFSTAFGFMAQAALYAEKLDHHPEWFNAYNRVDVTLATHSENGVTELDIKMARKMNAIAG</sequence>
<name>PHS_BRUAB</name>
<feature type="chain" id="PRO_0000231441" description="Putative pterin-4-alpha-carbinolamine dehydratase">
    <location>
        <begin position="1"/>
        <end position="97"/>
    </location>
</feature>
<dbReference type="EC" id="4.2.1.96" evidence="1"/>
<dbReference type="EMBL" id="AE017223">
    <property type="protein sequence ID" value="AAX73498.1"/>
    <property type="molecule type" value="Genomic_DNA"/>
</dbReference>
<dbReference type="RefSeq" id="WP_002965330.1">
    <property type="nucleotide sequence ID" value="NC_006932.1"/>
</dbReference>
<dbReference type="SMR" id="Q57FT6"/>
<dbReference type="EnsemblBacteria" id="AAX73498">
    <property type="protein sequence ID" value="AAX73498"/>
    <property type="gene ID" value="BruAb1_0080"/>
</dbReference>
<dbReference type="KEGG" id="bmb:BruAb1_0080"/>
<dbReference type="HOGENOM" id="CLU_081974_3_2_5"/>
<dbReference type="Proteomes" id="UP000000540">
    <property type="component" value="Chromosome I"/>
</dbReference>
<dbReference type="GO" id="GO:0008124">
    <property type="term" value="F:4-alpha-hydroxytetrahydrobiopterin dehydratase activity"/>
    <property type="evidence" value="ECO:0007669"/>
    <property type="project" value="UniProtKB-UniRule"/>
</dbReference>
<dbReference type="GO" id="GO:0006729">
    <property type="term" value="P:tetrahydrobiopterin biosynthetic process"/>
    <property type="evidence" value="ECO:0007669"/>
    <property type="project" value="InterPro"/>
</dbReference>
<dbReference type="CDD" id="cd00914">
    <property type="entry name" value="PCD_DCoH_subfamily_b"/>
    <property type="match status" value="1"/>
</dbReference>
<dbReference type="Gene3D" id="3.30.1360.20">
    <property type="entry name" value="Transcriptional coactivator/pterin dehydratase"/>
    <property type="match status" value="1"/>
</dbReference>
<dbReference type="HAMAP" id="MF_00434">
    <property type="entry name" value="Pterin_4_alpha"/>
    <property type="match status" value="1"/>
</dbReference>
<dbReference type="InterPro" id="IPR036428">
    <property type="entry name" value="PCD_sf"/>
</dbReference>
<dbReference type="InterPro" id="IPR001533">
    <property type="entry name" value="Pterin_deHydtase"/>
</dbReference>
<dbReference type="NCBIfam" id="NF002017">
    <property type="entry name" value="PRK00823.1-2"/>
    <property type="match status" value="1"/>
</dbReference>
<dbReference type="NCBIfam" id="NF002018">
    <property type="entry name" value="PRK00823.1-3"/>
    <property type="match status" value="1"/>
</dbReference>
<dbReference type="PANTHER" id="PTHR12599">
    <property type="entry name" value="PTERIN-4-ALPHA-CARBINOLAMINE DEHYDRATASE"/>
    <property type="match status" value="1"/>
</dbReference>
<dbReference type="PANTHER" id="PTHR12599:SF0">
    <property type="entry name" value="PTERIN-4-ALPHA-CARBINOLAMINE DEHYDRATASE"/>
    <property type="match status" value="1"/>
</dbReference>
<dbReference type="Pfam" id="PF01329">
    <property type="entry name" value="Pterin_4a"/>
    <property type="match status" value="1"/>
</dbReference>
<dbReference type="SUPFAM" id="SSF55248">
    <property type="entry name" value="PCD-like"/>
    <property type="match status" value="1"/>
</dbReference>
<proteinExistence type="inferred from homology"/>